<feature type="chain" id="PRO_1000117333" description="Translation initiation factor IF-2">
    <location>
        <begin position="1"/>
        <end position="890"/>
    </location>
</feature>
<feature type="domain" description="tr-type G">
    <location>
        <begin position="389"/>
        <end position="558"/>
    </location>
</feature>
<feature type="region of interest" description="Disordered" evidence="3">
    <location>
        <begin position="45"/>
        <end position="304"/>
    </location>
</feature>
<feature type="region of interest" description="G1" evidence="1">
    <location>
        <begin position="398"/>
        <end position="405"/>
    </location>
</feature>
<feature type="region of interest" description="G2" evidence="1">
    <location>
        <begin position="423"/>
        <end position="427"/>
    </location>
</feature>
<feature type="region of interest" description="G3" evidence="1">
    <location>
        <begin position="444"/>
        <end position="447"/>
    </location>
</feature>
<feature type="region of interest" description="G4" evidence="1">
    <location>
        <begin position="498"/>
        <end position="501"/>
    </location>
</feature>
<feature type="region of interest" description="G5" evidence="1">
    <location>
        <begin position="534"/>
        <end position="536"/>
    </location>
</feature>
<feature type="compositionally biased region" description="Polar residues" evidence="3">
    <location>
        <begin position="67"/>
        <end position="81"/>
    </location>
</feature>
<feature type="compositionally biased region" description="Basic and acidic residues" evidence="3">
    <location>
        <begin position="92"/>
        <end position="217"/>
    </location>
</feature>
<feature type="compositionally biased region" description="Basic residues" evidence="3">
    <location>
        <begin position="252"/>
        <end position="266"/>
    </location>
</feature>
<feature type="compositionally biased region" description="Basic and acidic residues" evidence="3">
    <location>
        <begin position="267"/>
        <end position="280"/>
    </location>
</feature>
<feature type="binding site" evidence="2">
    <location>
        <begin position="398"/>
        <end position="405"/>
    </location>
    <ligand>
        <name>GTP</name>
        <dbReference type="ChEBI" id="CHEBI:37565"/>
    </ligand>
</feature>
<feature type="binding site" evidence="2">
    <location>
        <begin position="444"/>
        <end position="448"/>
    </location>
    <ligand>
        <name>GTP</name>
        <dbReference type="ChEBI" id="CHEBI:37565"/>
    </ligand>
</feature>
<feature type="binding site" evidence="2">
    <location>
        <begin position="498"/>
        <end position="501"/>
    </location>
    <ligand>
        <name>GTP</name>
        <dbReference type="ChEBI" id="CHEBI:37565"/>
    </ligand>
</feature>
<feature type="modified residue" description="N6-acetyllysine" evidence="1">
    <location>
        <position position="808"/>
    </location>
</feature>
<comment type="function">
    <text evidence="2">One of the essential components for the initiation of protein synthesis. Protects formylmethionyl-tRNA from spontaneous hydrolysis and promotes its binding to the 30S ribosomal subunits. Also involved in the hydrolysis of GTP during the formation of the 70S ribosomal complex.</text>
</comment>
<comment type="subcellular location">
    <subcellularLocation>
        <location evidence="2">Cytoplasm</location>
    </subcellularLocation>
</comment>
<comment type="similarity">
    <text evidence="2">Belongs to the TRAFAC class translation factor GTPase superfamily. Classic translation factor GTPase family. IF-2 subfamily.</text>
</comment>
<protein>
    <recommendedName>
        <fullName evidence="2">Translation initiation factor IF-2</fullName>
    </recommendedName>
</protein>
<organism>
    <name type="scientific">Escherichia fergusonii (strain ATCC 35469 / DSM 13698 / CCUG 18766 / IAM 14443 / JCM 21226 / LMG 7866 / NBRC 102419 / NCTC 12128 / CDC 0568-73)</name>
    <dbReference type="NCBI Taxonomy" id="585054"/>
    <lineage>
        <taxon>Bacteria</taxon>
        <taxon>Pseudomonadati</taxon>
        <taxon>Pseudomonadota</taxon>
        <taxon>Gammaproteobacteria</taxon>
        <taxon>Enterobacterales</taxon>
        <taxon>Enterobacteriaceae</taxon>
        <taxon>Escherichia</taxon>
    </lineage>
</organism>
<proteinExistence type="inferred from homology"/>
<accession>B7LR37</accession>
<reference key="1">
    <citation type="journal article" date="2009" name="PLoS Genet.">
        <title>Organised genome dynamics in the Escherichia coli species results in highly diverse adaptive paths.</title>
        <authorList>
            <person name="Touchon M."/>
            <person name="Hoede C."/>
            <person name="Tenaillon O."/>
            <person name="Barbe V."/>
            <person name="Baeriswyl S."/>
            <person name="Bidet P."/>
            <person name="Bingen E."/>
            <person name="Bonacorsi S."/>
            <person name="Bouchier C."/>
            <person name="Bouvet O."/>
            <person name="Calteau A."/>
            <person name="Chiapello H."/>
            <person name="Clermont O."/>
            <person name="Cruveiller S."/>
            <person name="Danchin A."/>
            <person name="Diard M."/>
            <person name="Dossat C."/>
            <person name="Karoui M.E."/>
            <person name="Frapy E."/>
            <person name="Garry L."/>
            <person name="Ghigo J.M."/>
            <person name="Gilles A.M."/>
            <person name="Johnson J."/>
            <person name="Le Bouguenec C."/>
            <person name="Lescat M."/>
            <person name="Mangenot S."/>
            <person name="Martinez-Jehanne V."/>
            <person name="Matic I."/>
            <person name="Nassif X."/>
            <person name="Oztas S."/>
            <person name="Petit M.A."/>
            <person name="Pichon C."/>
            <person name="Rouy Z."/>
            <person name="Ruf C.S."/>
            <person name="Schneider D."/>
            <person name="Tourret J."/>
            <person name="Vacherie B."/>
            <person name="Vallenet D."/>
            <person name="Medigue C."/>
            <person name="Rocha E.P.C."/>
            <person name="Denamur E."/>
        </authorList>
    </citation>
    <scope>NUCLEOTIDE SEQUENCE [LARGE SCALE GENOMIC DNA]</scope>
    <source>
        <strain>ATCC 35469 / DSM 13698 / BCRC 15582 / CCUG 18766 / IAM 14443 / JCM 21226 / LMG 7866 / NBRC 102419 / NCTC 12128 / CDC 0568-73</strain>
    </source>
</reference>
<name>IF2_ESCF3</name>
<keyword id="KW-0007">Acetylation</keyword>
<keyword id="KW-0963">Cytoplasm</keyword>
<keyword id="KW-0342">GTP-binding</keyword>
<keyword id="KW-0396">Initiation factor</keyword>
<keyword id="KW-0547">Nucleotide-binding</keyword>
<keyword id="KW-0648">Protein biosynthesis</keyword>
<sequence length="890" mass="97313">MTDVTIKTLAAERQTSVERLVQQFADAGIRKSADDSVSAQEKQTLIDHLNQKNSGPDKLTLQRKTRSTLNIPGTGGKSKSVQIEVRKKRTFVKRDPQEAERLAAEEQAQREAEEQARREAEESAKREAQQKAEREAAEQAKREAAEQAKREAAEKDKVSNQQDDMTKNAQAEKARREQEAAELKRKAEEEARRKLEEEARRVAEEARRMAEENKWTDNAEPTEDSSDYHVTTSQHARQAEDESDREVEGGRGRGRNAKAARPKKGNKHSESKADREEARAAVRGGKGGKRKGSSLQQGFQKPAQAVNRDVVIGETITVGELANKMAVKGSQVIKAMMKLGAMATINQVIDQETAQLVAEEMGHKVILRRENELEEAVMSDRDTGAAAEPRAPVVTIMGHVDHGKTSLLDYIRSTKVASGEAGGITQHIGAYHVETENGMITFLDTPGHAAFTSMRARGAQATDIVVLVVAADDGVMPQTIEAIQHAKAAGVPVVVAVNKIDKPEADPDRVKNELSQYGILPEEWGGESQFVHVSAKAGTGIDELLDAILLQAEVLELKAVRKGMASGAVIESFLDKGRGPVATVLVREGTLHKGDIVLCGFEYGRVRAMRNEMGQEVLEAGPSIPVEILGLSGVPAAGDEVTVVRDEKKAREVALYRQGKFREVKLARQQKSKLENMFANMTEGEVHEVNIVLKADVQGSVEAISDSLLKLSTDEVKVKIIGSGVGGITETDATLAAASNAILVGFNVRADASARKVIEAESLDLRYYSVIYNLIDEVKAAMSGMLSPELKQQIIGLAEVRDVFKSPKFGAIAGCMVTEGVVKRHNPIRVLRDNVVIYEGELESLRRFKDDVNEVRNGMECGIGVKNYNDVRTGDVIEVFEIIEIQRTIA</sequence>
<gene>
    <name evidence="2" type="primary">infB</name>
    <name type="ordered locus">EFER_3147</name>
</gene>
<dbReference type="EMBL" id="CU928158">
    <property type="protein sequence ID" value="CAQ90640.1"/>
    <property type="molecule type" value="Genomic_DNA"/>
</dbReference>
<dbReference type="RefSeq" id="WP_000133052.1">
    <property type="nucleotide sequence ID" value="NC_011740.1"/>
</dbReference>
<dbReference type="SMR" id="B7LR37"/>
<dbReference type="GeneID" id="75060237"/>
<dbReference type="KEGG" id="efe:EFER_3147"/>
<dbReference type="HOGENOM" id="CLU_006301_6_3_6"/>
<dbReference type="OrthoDB" id="9811804at2"/>
<dbReference type="Proteomes" id="UP000000745">
    <property type="component" value="Chromosome"/>
</dbReference>
<dbReference type="GO" id="GO:0005829">
    <property type="term" value="C:cytosol"/>
    <property type="evidence" value="ECO:0007669"/>
    <property type="project" value="TreeGrafter"/>
</dbReference>
<dbReference type="GO" id="GO:0005525">
    <property type="term" value="F:GTP binding"/>
    <property type="evidence" value="ECO:0007669"/>
    <property type="project" value="UniProtKB-KW"/>
</dbReference>
<dbReference type="GO" id="GO:0003924">
    <property type="term" value="F:GTPase activity"/>
    <property type="evidence" value="ECO:0007669"/>
    <property type="project" value="UniProtKB-UniRule"/>
</dbReference>
<dbReference type="GO" id="GO:0097216">
    <property type="term" value="F:guanosine tetraphosphate binding"/>
    <property type="evidence" value="ECO:0007669"/>
    <property type="project" value="UniProtKB-ARBA"/>
</dbReference>
<dbReference type="GO" id="GO:0003743">
    <property type="term" value="F:translation initiation factor activity"/>
    <property type="evidence" value="ECO:0007669"/>
    <property type="project" value="UniProtKB-UniRule"/>
</dbReference>
<dbReference type="CDD" id="cd01887">
    <property type="entry name" value="IF2_eIF5B"/>
    <property type="match status" value="1"/>
</dbReference>
<dbReference type="CDD" id="cd03702">
    <property type="entry name" value="IF2_mtIF2_II"/>
    <property type="match status" value="1"/>
</dbReference>
<dbReference type="CDD" id="cd03692">
    <property type="entry name" value="mtIF2_IVc"/>
    <property type="match status" value="1"/>
</dbReference>
<dbReference type="FunFam" id="2.40.30.10:FF:000007">
    <property type="entry name" value="Translation initiation factor IF-2"/>
    <property type="match status" value="1"/>
</dbReference>
<dbReference type="FunFam" id="2.40.30.10:FF:000008">
    <property type="entry name" value="Translation initiation factor IF-2"/>
    <property type="match status" value="1"/>
</dbReference>
<dbReference type="FunFam" id="3.30.56.50:FF:000001">
    <property type="entry name" value="Translation initiation factor IF-2"/>
    <property type="match status" value="1"/>
</dbReference>
<dbReference type="FunFam" id="3.40.50.10050:FF:000001">
    <property type="entry name" value="Translation initiation factor IF-2"/>
    <property type="match status" value="1"/>
</dbReference>
<dbReference type="FunFam" id="3.40.50.300:FF:000019">
    <property type="entry name" value="Translation initiation factor IF-2"/>
    <property type="match status" value="1"/>
</dbReference>
<dbReference type="Gene3D" id="3.40.50.300">
    <property type="entry name" value="P-loop containing nucleotide triphosphate hydrolases"/>
    <property type="match status" value="1"/>
</dbReference>
<dbReference type="Gene3D" id="3.30.56.50">
    <property type="entry name" value="Putative DNA-binding domain, N-terminal subdomain of bacterial translation initiation factor IF2"/>
    <property type="match status" value="1"/>
</dbReference>
<dbReference type="Gene3D" id="2.40.30.10">
    <property type="entry name" value="Translation factors"/>
    <property type="match status" value="2"/>
</dbReference>
<dbReference type="Gene3D" id="3.40.50.10050">
    <property type="entry name" value="Translation initiation factor IF- 2, domain 3"/>
    <property type="match status" value="1"/>
</dbReference>
<dbReference type="HAMAP" id="MF_00100_B">
    <property type="entry name" value="IF_2_B"/>
    <property type="match status" value="1"/>
</dbReference>
<dbReference type="InterPro" id="IPR009061">
    <property type="entry name" value="DNA-bd_dom_put_sf"/>
</dbReference>
<dbReference type="InterPro" id="IPR053905">
    <property type="entry name" value="EF-G-like_DII"/>
</dbReference>
<dbReference type="InterPro" id="IPR004161">
    <property type="entry name" value="EFTu-like_2"/>
</dbReference>
<dbReference type="InterPro" id="IPR013575">
    <property type="entry name" value="IF2_assoc_dom_bac"/>
</dbReference>
<dbReference type="InterPro" id="IPR044145">
    <property type="entry name" value="IF2_II"/>
</dbReference>
<dbReference type="InterPro" id="IPR006847">
    <property type="entry name" value="IF2_N"/>
</dbReference>
<dbReference type="InterPro" id="IPR027417">
    <property type="entry name" value="P-loop_NTPase"/>
</dbReference>
<dbReference type="InterPro" id="IPR005225">
    <property type="entry name" value="Small_GTP-bd"/>
</dbReference>
<dbReference type="InterPro" id="IPR000795">
    <property type="entry name" value="T_Tr_GTP-bd_dom"/>
</dbReference>
<dbReference type="InterPro" id="IPR000178">
    <property type="entry name" value="TF_IF2_bacterial-like"/>
</dbReference>
<dbReference type="InterPro" id="IPR015760">
    <property type="entry name" value="TIF_IF2"/>
</dbReference>
<dbReference type="InterPro" id="IPR023115">
    <property type="entry name" value="TIF_IF2_dom3"/>
</dbReference>
<dbReference type="InterPro" id="IPR036925">
    <property type="entry name" value="TIF_IF2_dom3_sf"/>
</dbReference>
<dbReference type="InterPro" id="IPR009000">
    <property type="entry name" value="Transl_B-barrel_sf"/>
</dbReference>
<dbReference type="NCBIfam" id="TIGR00487">
    <property type="entry name" value="IF-2"/>
    <property type="match status" value="1"/>
</dbReference>
<dbReference type="NCBIfam" id="TIGR00231">
    <property type="entry name" value="small_GTP"/>
    <property type="match status" value="1"/>
</dbReference>
<dbReference type="PANTHER" id="PTHR43381:SF5">
    <property type="entry name" value="TR-TYPE G DOMAIN-CONTAINING PROTEIN"/>
    <property type="match status" value="1"/>
</dbReference>
<dbReference type="PANTHER" id="PTHR43381">
    <property type="entry name" value="TRANSLATION INITIATION FACTOR IF-2-RELATED"/>
    <property type="match status" value="1"/>
</dbReference>
<dbReference type="Pfam" id="PF22042">
    <property type="entry name" value="EF-G_D2"/>
    <property type="match status" value="1"/>
</dbReference>
<dbReference type="Pfam" id="PF00009">
    <property type="entry name" value="GTP_EFTU"/>
    <property type="match status" value="1"/>
</dbReference>
<dbReference type="Pfam" id="PF03144">
    <property type="entry name" value="GTP_EFTU_D2"/>
    <property type="match status" value="1"/>
</dbReference>
<dbReference type="Pfam" id="PF11987">
    <property type="entry name" value="IF-2"/>
    <property type="match status" value="1"/>
</dbReference>
<dbReference type="Pfam" id="PF08364">
    <property type="entry name" value="IF2_assoc"/>
    <property type="match status" value="1"/>
</dbReference>
<dbReference type="Pfam" id="PF04760">
    <property type="entry name" value="IF2_N"/>
    <property type="match status" value="2"/>
</dbReference>
<dbReference type="SUPFAM" id="SSF52156">
    <property type="entry name" value="Initiation factor IF2/eIF5b, domain 3"/>
    <property type="match status" value="1"/>
</dbReference>
<dbReference type="SUPFAM" id="SSF52540">
    <property type="entry name" value="P-loop containing nucleoside triphosphate hydrolases"/>
    <property type="match status" value="1"/>
</dbReference>
<dbReference type="SUPFAM" id="SSF46955">
    <property type="entry name" value="Putative DNA-binding domain"/>
    <property type="match status" value="1"/>
</dbReference>
<dbReference type="SUPFAM" id="SSF50447">
    <property type="entry name" value="Translation proteins"/>
    <property type="match status" value="2"/>
</dbReference>
<dbReference type="PROSITE" id="PS51722">
    <property type="entry name" value="G_TR_2"/>
    <property type="match status" value="1"/>
</dbReference>
<dbReference type="PROSITE" id="PS01176">
    <property type="entry name" value="IF2"/>
    <property type="match status" value="1"/>
</dbReference>
<evidence type="ECO:0000250" key="1"/>
<evidence type="ECO:0000255" key="2">
    <source>
        <dbReference type="HAMAP-Rule" id="MF_00100"/>
    </source>
</evidence>
<evidence type="ECO:0000256" key="3">
    <source>
        <dbReference type="SAM" id="MobiDB-lite"/>
    </source>
</evidence>